<name>MDH_ECO81</name>
<protein>
    <recommendedName>
        <fullName evidence="1">Malate dehydrogenase</fullName>
        <ecNumber evidence="1">1.1.1.37</ecNumber>
    </recommendedName>
</protein>
<organism>
    <name type="scientific">Escherichia coli O81 (strain ED1a)</name>
    <dbReference type="NCBI Taxonomy" id="585397"/>
    <lineage>
        <taxon>Bacteria</taxon>
        <taxon>Pseudomonadati</taxon>
        <taxon>Pseudomonadota</taxon>
        <taxon>Gammaproteobacteria</taxon>
        <taxon>Enterobacterales</taxon>
        <taxon>Enterobacteriaceae</taxon>
        <taxon>Escherichia</taxon>
    </lineage>
</organism>
<dbReference type="EC" id="1.1.1.37" evidence="1"/>
<dbReference type="EMBL" id="CU928162">
    <property type="protein sequence ID" value="CAR09889.1"/>
    <property type="molecule type" value="Genomic_DNA"/>
</dbReference>
<dbReference type="RefSeq" id="WP_001295272.1">
    <property type="nucleotide sequence ID" value="NC_011745.1"/>
</dbReference>
<dbReference type="SMR" id="B7N0M1"/>
<dbReference type="GeneID" id="93778749"/>
<dbReference type="KEGG" id="ecq:ECED1_3886"/>
<dbReference type="HOGENOM" id="CLU_047181_0_1_6"/>
<dbReference type="Proteomes" id="UP000000748">
    <property type="component" value="Chromosome"/>
</dbReference>
<dbReference type="GO" id="GO:0005737">
    <property type="term" value="C:cytoplasm"/>
    <property type="evidence" value="ECO:0007669"/>
    <property type="project" value="TreeGrafter"/>
</dbReference>
<dbReference type="GO" id="GO:0030060">
    <property type="term" value="F:L-malate dehydrogenase (NAD+) activity"/>
    <property type="evidence" value="ECO:0007669"/>
    <property type="project" value="UniProtKB-UniRule"/>
</dbReference>
<dbReference type="GO" id="GO:0006108">
    <property type="term" value="P:malate metabolic process"/>
    <property type="evidence" value="ECO:0007669"/>
    <property type="project" value="InterPro"/>
</dbReference>
<dbReference type="GO" id="GO:0006099">
    <property type="term" value="P:tricarboxylic acid cycle"/>
    <property type="evidence" value="ECO:0007669"/>
    <property type="project" value="UniProtKB-UniRule"/>
</dbReference>
<dbReference type="CDD" id="cd01337">
    <property type="entry name" value="MDH_glyoxysomal_mitochondrial"/>
    <property type="match status" value="1"/>
</dbReference>
<dbReference type="FunFam" id="3.40.50.720:FF:000017">
    <property type="entry name" value="Malate dehydrogenase"/>
    <property type="match status" value="1"/>
</dbReference>
<dbReference type="FunFam" id="3.90.110.10:FF:000001">
    <property type="entry name" value="Malate dehydrogenase"/>
    <property type="match status" value="1"/>
</dbReference>
<dbReference type="Gene3D" id="3.90.110.10">
    <property type="entry name" value="Lactate dehydrogenase/glycoside hydrolase, family 4, C-terminal"/>
    <property type="match status" value="1"/>
</dbReference>
<dbReference type="Gene3D" id="3.40.50.720">
    <property type="entry name" value="NAD(P)-binding Rossmann-like Domain"/>
    <property type="match status" value="1"/>
</dbReference>
<dbReference type="HAMAP" id="MF_01516">
    <property type="entry name" value="Malate_dehydrog_1"/>
    <property type="match status" value="1"/>
</dbReference>
<dbReference type="InterPro" id="IPR001557">
    <property type="entry name" value="L-lactate/malate_DH"/>
</dbReference>
<dbReference type="InterPro" id="IPR022383">
    <property type="entry name" value="Lactate/malate_DH_C"/>
</dbReference>
<dbReference type="InterPro" id="IPR001236">
    <property type="entry name" value="Lactate/malate_DH_N"/>
</dbReference>
<dbReference type="InterPro" id="IPR015955">
    <property type="entry name" value="Lactate_DH/Glyco_Ohase_4_C"/>
</dbReference>
<dbReference type="InterPro" id="IPR001252">
    <property type="entry name" value="Malate_DH_AS"/>
</dbReference>
<dbReference type="InterPro" id="IPR010097">
    <property type="entry name" value="Malate_DH_type1"/>
</dbReference>
<dbReference type="InterPro" id="IPR023958">
    <property type="entry name" value="Malate_DH_type1_bac"/>
</dbReference>
<dbReference type="InterPro" id="IPR036291">
    <property type="entry name" value="NAD(P)-bd_dom_sf"/>
</dbReference>
<dbReference type="NCBIfam" id="TIGR01772">
    <property type="entry name" value="MDH_euk_gproteo"/>
    <property type="match status" value="1"/>
</dbReference>
<dbReference type="PANTHER" id="PTHR11540">
    <property type="entry name" value="MALATE AND LACTATE DEHYDROGENASE"/>
    <property type="match status" value="1"/>
</dbReference>
<dbReference type="PANTHER" id="PTHR11540:SF16">
    <property type="entry name" value="MALATE DEHYDROGENASE, MITOCHONDRIAL"/>
    <property type="match status" value="1"/>
</dbReference>
<dbReference type="Pfam" id="PF02866">
    <property type="entry name" value="Ldh_1_C"/>
    <property type="match status" value="1"/>
</dbReference>
<dbReference type="Pfam" id="PF00056">
    <property type="entry name" value="Ldh_1_N"/>
    <property type="match status" value="1"/>
</dbReference>
<dbReference type="PIRSF" id="PIRSF000102">
    <property type="entry name" value="Lac_mal_DH"/>
    <property type="match status" value="1"/>
</dbReference>
<dbReference type="SUPFAM" id="SSF56327">
    <property type="entry name" value="LDH C-terminal domain-like"/>
    <property type="match status" value="1"/>
</dbReference>
<dbReference type="SUPFAM" id="SSF51735">
    <property type="entry name" value="NAD(P)-binding Rossmann-fold domains"/>
    <property type="match status" value="1"/>
</dbReference>
<dbReference type="PROSITE" id="PS00068">
    <property type="entry name" value="MDH"/>
    <property type="match status" value="1"/>
</dbReference>
<proteinExistence type="inferred from homology"/>
<keyword id="KW-0520">NAD</keyword>
<keyword id="KW-0560">Oxidoreductase</keyword>
<keyword id="KW-0816">Tricarboxylic acid cycle</keyword>
<reference key="1">
    <citation type="journal article" date="2009" name="PLoS Genet.">
        <title>Organised genome dynamics in the Escherichia coli species results in highly diverse adaptive paths.</title>
        <authorList>
            <person name="Touchon M."/>
            <person name="Hoede C."/>
            <person name="Tenaillon O."/>
            <person name="Barbe V."/>
            <person name="Baeriswyl S."/>
            <person name="Bidet P."/>
            <person name="Bingen E."/>
            <person name="Bonacorsi S."/>
            <person name="Bouchier C."/>
            <person name="Bouvet O."/>
            <person name="Calteau A."/>
            <person name="Chiapello H."/>
            <person name="Clermont O."/>
            <person name="Cruveiller S."/>
            <person name="Danchin A."/>
            <person name="Diard M."/>
            <person name="Dossat C."/>
            <person name="Karoui M.E."/>
            <person name="Frapy E."/>
            <person name="Garry L."/>
            <person name="Ghigo J.M."/>
            <person name="Gilles A.M."/>
            <person name="Johnson J."/>
            <person name="Le Bouguenec C."/>
            <person name="Lescat M."/>
            <person name="Mangenot S."/>
            <person name="Martinez-Jehanne V."/>
            <person name="Matic I."/>
            <person name="Nassif X."/>
            <person name="Oztas S."/>
            <person name="Petit M.A."/>
            <person name="Pichon C."/>
            <person name="Rouy Z."/>
            <person name="Ruf C.S."/>
            <person name="Schneider D."/>
            <person name="Tourret J."/>
            <person name="Vacherie B."/>
            <person name="Vallenet D."/>
            <person name="Medigue C."/>
            <person name="Rocha E.P.C."/>
            <person name="Denamur E."/>
        </authorList>
    </citation>
    <scope>NUCLEOTIDE SEQUENCE [LARGE SCALE GENOMIC DNA]</scope>
    <source>
        <strain>ED1a</strain>
    </source>
</reference>
<gene>
    <name evidence="1" type="primary">mdh</name>
    <name type="ordered locus">ECED1_3886</name>
</gene>
<sequence length="312" mass="32337">MKVAVLGAAGGIGQALALLLKTQLPSGSELSLYDIAPVTPGVAVDLSHIPTAVKIKGFSGEDATPALEGADVVLISAGVARKPGMDRSDLFNVNAGIVKNLVQQVAKTCPKACIGIITNPVNTTVAIAAEVLKKAGVYDKNKLFGVTTLDIIRSNTFVAELKGKQPGEVEVPVIGGHSGVTILPLLSQVPGVSFTEQEVADLTKRIQNAGTEVVEAKAGGGSATLSMGQAAARFGLSLVRALQGEQGVVECAYVEGDGQYARFFSQPLLLGKNGVEERKSIGTLSAFEQNALEGMLDTLKKDIALGEEFVNK</sequence>
<accession>B7N0M1</accession>
<evidence type="ECO:0000255" key="1">
    <source>
        <dbReference type="HAMAP-Rule" id="MF_01516"/>
    </source>
</evidence>
<comment type="function">
    <text evidence="1">Catalyzes the reversible oxidation of malate to oxaloacetate.</text>
</comment>
<comment type="catalytic activity">
    <reaction evidence="1">
        <text>(S)-malate + NAD(+) = oxaloacetate + NADH + H(+)</text>
        <dbReference type="Rhea" id="RHEA:21432"/>
        <dbReference type="ChEBI" id="CHEBI:15378"/>
        <dbReference type="ChEBI" id="CHEBI:15589"/>
        <dbReference type="ChEBI" id="CHEBI:16452"/>
        <dbReference type="ChEBI" id="CHEBI:57540"/>
        <dbReference type="ChEBI" id="CHEBI:57945"/>
        <dbReference type="EC" id="1.1.1.37"/>
    </reaction>
</comment>
<comment type="subunit">
    <text evidence="1">Homodimer.</text>
</comment>
<comment type="similarity">
    <text evidence="1">Belongs to the LDH/MDH superfamily. MDH type 1 family.</text>
</comment>
<feature type="chain" id="PRO_1000185077" description="Malate dehydrogenase">
    <location>
        <begin position="1"/>
        <end position="312"/>
    </location>
</feature>
<feature type="active site" description="Proton acceptor" evidence="1">
    <location>
        <position position="177"/>
    </location>
</feature>
<feature type="binding site" evidence="1">
    <location>
        <begin position="7"/>
        <end position="13"/>
    </location>
    <ligand>
        <name>NAD(+)</name>
        <dbReference type="ChEBI" id="CHEBI:57540"/>
    </ligand>
</feature>
<feature type="binding site" evidence="1">
    <location>
        <position position="34"/>
    </location>
    <ligand>
        <name>NAD(+)</name>
        <dbReference type="ChEBI" id="CHEBI:57540"/>
    </ligand>
</feature>
<feature type="binding site" evidence="1">
    <location>
        <position position="81"/>
    </location>
    <ligand>
        <name>substrate</name>
    </ligand>
</feature>
<feature type="binding site" evidence="1">
    <location>
        <position position="87"/>
    </location>
    <ligand>
        <name>substrate</name>
    </ligand>
</feature>
<feature type="binding site" evidence="1">
    <location>
        <position position="94"/>
    </location>
    <ligand>
        <name>NAD(+)</name>
        <dbReference type="ChEBI" id="CHEBI:57540"/>
    </ligand>
</feature>
<feature type="binding site" evidence="1">
    <location>
        <begin position="117"/>
        <end position="119"/>
    </location>
    <ligand>
        <name>NAD(+)</name>
        <dbReference type="ChEBI" id="CHEBI:57540"/>
    </ligand>
</feature>
<feature type="binding site" evidence="1">
    <location>
        <position position="119"/>
    </location>
    <ligand>
        <name>substrate</name>
    </ligand>
</feature>
<feature type="binding site" evidence="1">
    <location>
        <position position="153"/>
    </location>
    <ligand>
        <name>substrate</name>
    </ligand>
</feature>
<feature type="binding site" evidence="1">
    <location>
        <position position="227"/>
    </location>
    <ligand>
        <name>NAD(+)</name>
        <dbReference type="ChEBI" id="CHEBI:57540"/>
    </ligand>
</feature>